<protein>
    <recommendedName>
        <fullName>Citrate synthase 4, mitochondrial</fullName>
        <ecNumber>2.3.3.16</ecNumber>
    </recommendedName>
</protein>
<reference key="1">
    <citation type="journal article" date="1989" name="Plant Mol. Biol.">
        <title>Isolation of a cDNA encoding mitochondrial citrate synthase from Arabidopsis thaliana.</title>
        <authorList>
            <person name="Unger E.A."/>
            <person name="Hand J.M."/>
            <person name="Cashmore A.R."/>
            <person name="Vasconcelos A.C."/>
        </authorList>
    </citation>
    <scope>NUCLEOTIDE SEQUENCE [MRNA] (ISOFORM 1)</scope>
</reference>
<reference key="2">
    <citation type="journal article" date="1999" name="Nature">
        <title>Sequence and analysis of chromosome 2 of the plant Arabidopsis thaliana.</title>
        <authorList>
            <person name="Lin X."/>
            <person name="Kaul S."/>
            <person name="Rounsley S.D."/>
            <person name="Shea T.P."/>
            <person name="Benito M.-I."/>
            <person name="Town C.D."/>
            <person name="Fujii C.Y."/>
            <person name="Mason T.M."/>
            <person name="Bowman C.L."/>
            <person name="Barnstead M.E."/>
            <person name="Feldblyum T.V."/>
            <person name="Buell C.R."/>
            <person name="Ketchum K.A."/>
            <person name="Lee J.J."/>
            <person name="Ronning C.M."/>
            <person name="Koo H.L."/>
            <person name="Moffat K.S."/>
            <person name="Cronin L.A."/>
            <person name="Shen M."/>
            <person name="Pai G."/>
            <person name="Van Aken S."/>
            <person name="Umayam L."/>
            <person name="Tallon L.J."/>
            <person name="Gill J.E."/>
            <person name="Adams M.D."/>
            <person name="Carrera A.J."/>
            <person name="Creasy T.H."/>
            <person name="Goodman H.M."/>
            <person name="Somerville C.R."/>
            <person name="Copenhaver G.P."/>
            <person name="Preuss D."/>
            <person name="Nierman W.C."/>
            <person name="White O."/>
            <person name="Eisen J.A."/>
            <person name="Salzberg S.L."/>
            <person name="Fraser C.M."/>
            <person name="Venter J.C."/>
        </authorList>
    </citation>
    <scope>NUCLEOTIDE SEQUENCE [LARGE SCALE GENOMIC DNA]</scope>
    <source>
        <strain>cv. Columbia</strain>
    </source>
</reference>
<reference key="3">
    <citation type="journal article" date="2017" name="Plant J.">
        <title>Araport11: a complete reannotation of the Arabidopsis thaliana reference genome.</title>
        <authorList>
            <person name="Cheng C.Y."/>
            <person name="Krishnakumar V."/>
            <person name="Chan A.P."/>
            <person name="Thibaud-Nissen F."/>
            <person name="Schobel S."/>
            <person name="Town C.D."/>
        </authorList>
    </citation>
    <scope>GENOME REANNOTATION</scope>
    <source>
        <strain>cv. Columbia</strain>
    </source>
</reference>
<reference key="4">
    <citation type="journal article" date="2003" name="Science">
        <title>Empirical analysis of transcriptional activity in the Arabidopsis genome.</title>
        <authorList>
            <person name="Yamada K."/>
            <person name="Lim J."/>
            <person name="Dale J.M."/>
            <person name="Chen H."/>
            <person name="Shinn P."/>
            <person name="Palm C.J."/>
            <person name="Southwick A.M."/>
            <person name="Wu H.C."/>
            <person name="Kim C.J."/>
            <person name="Nguyen M."/>
            <person name="Pham P.K."/>
            <person name="Cheuk R.F."/>
            <person name="Karlin-Newmann G."/>
            <person name="Liu S.X."/>
            <person name="Lam B."/>
            <person name="Sakano H."/>
            <person name="Wu T."/>
            <person name="Yu G."/>
            <person name="Miranda M."/>
            <person name="Quach H.L."/>
            <person name="Tripp M."/>
            <person name="Chang C.H."/>
            <person name="Lee J.M."/>
            <person name="Toriumi M.J."/>
            <person name="Chan M.M."/>
            <person name="Tang C.C."/>
            <person name="Onodera C.S."/>
            <person name="Deng J.M."/>
            <person name="Akiyama K."/>
            <person name="Ansari Y."/>
            <person name="Arakawa T."/>
            <person name="Banh J."/>
            <person name="Banno F."/>
            <person name="Bowser L."/>
            <person name="Brooks S.Y."/>
            <person name="Carninci P."/>
            <person name="Chao Q."/>
            <person name="Choy N."/>
            <person name="Enju A."/>
            <person name="Goldsmith A.D."/>
            <person name="Gurjal M."/>
            <person name="Hansen N.F."/>
            <person name="Hayashizaki Y."/>
            <person name="Johnson-Hopson C."/>
            <person name="Hsuan V.W."/>
            <person name="Iida K."/>
            <person name="Karnes M."/>
            <person name="Khan S."/>
            <person name="Koesema E."/>
            <person name="Ishida J."/>
            <person name="Jiang P.X."/>
            <person name="Jones T."/>
            <person name="Kawai J."/>
            <person name="Kamiya A."/>
            <person name="Meyers C."/>
            <person name="Nakajima M."/>
            <person name="Narusaka M."/>
            <person name="Seki M."/>
            <person name="Sakurai T."/>
            <person name="Satou M."/>
            <person name="Tamse R."/>
            <person name="Vaysberg M."/>
            <person name="Wallender E.K."/>
            <person name="Wong C."/>
            <person name="Yamamura Y."/>
            <person name="Yuan S."/>
            <person name="Shinozaki K."/>
            <person name="Davis R.W."/>
            <person name="Theologis A."/>
            <person name="Ecker J.R."/>
        </authorList>
    </citation>
    <scope>NUCLEOTIDE SEQUENCE [LARGE SCALE MRNA] (ISOFORM 2)</scope>
    <source>
        <strain>cv. Columbia</strain>
    </source>
</reference>
<reference key="5">
    <citation type="submission" date="2002-03" db="EMBL/GenBank/DDBJ databases">
        <title>Full-length cDNA from Arabidopsis thaliana.</title>
        <authorList>
            <person name="Brover V.V."/>
            <person name="Troukhan M.E."/>
            <person name="Alexandrov N.A."/>
            <person name="Lu Y.-P."/>
            <person name="Flavell R.B."/>
            <person name="Feldmann K.A."/>
        </authorList>
    </citation>
    <scope>NUCLEOTIDE SEQUENCE [LARGE SCALE MRNA] (ISOFORM 2)</scope>
</reference>
<reference key="6">
    <citation type="journal article" date="2004" name="Biochem. Soc. Trans.">
        <title>Proteomic analysis of the Arabidopsis cell wall reveals unexpected proteins with new cellular locations.</title>
        <authorList>
            <person name="Slabas A.R."/>
            <person name="Ndimba B."/>
            <person name="Simon W.J."/>
            <person name="Chivasa S."/>
        </authorList>
    </citation>
    <scope>IDENTIFICATION BY MASS SPECTROMETRY</scope>
    <scope>POSSIBLE SUBCELLULAR LOCATION</scope>
</reference>
<reference key="7">
    <citation type="journal article" date="2004" name="Plant Cell">
        <title>Experimental analysis of the Arabidopsis mitochondrial proteome highlights signaling and regulatory components, provides assessment of targeting prediction programs, and indicates plant-specific mitochondrial proteins.</title>
        <authorList>
            <person name="Heazlewood J.L."/>
            <person name="Tonti-Filippini J.S."/>
            <person name="Gout A.M."/>
            <person name="Day D.A."/>
            <person name="Whelan J."/>
            <person name="Millar A.H."/>
        </authorList>
    </citation>
    <scope>IDENTIFICATION BY MASS SPECTROMETRY</scope>
    <scope>SUBCELLULAR LOCATION [LARGE SCALE ANALYSIS]</scope>
    <source>
        <strain>cv. Landsberg erecta</strain>
    </source>
</reference>
<comment type="catalytic activity">
    <reaction evidence="2">
        <text>oxaloacetate + acetyl-CoA + H2O = citrate + CoA + H(+)</text>
        <dbReference type="Rhea" id="RHEA:16845"/>
        <dbReference type="ChEBI" id="CHEBI:15377"/>
        <dbReference type="ChEBI" id="CHEBI:15378"/>
        <dbReference type="ChEBI" id="CHEBI:16452"/>
        <dbReference type="ChEBI" id="CHEBI:16947"/>
        <dbReference type="ChEBI" id="CHEBI:57287"/>
        <dbReference type="ChEBI" id="CHEBI:57288"/>
        <dbReference type="EC" id="2.3.3.16"/>
    </reaction>
</comment>
<comment type="pathway">
    <text>Carbohydrate metabolism; tricarboxylic acid cycle; isocitrate from oxaloacetate: step 1/2.</text>
</comment>
<comment type="subunit">
    <text>Homodimer.</text>
</comment>
<comment type="subcellular location">
    <subcellularLocation>
        <location evidence="3">Mitochondrion matrix</location>
    </subcellularLocation>
</comment>
<comment type="alternative products">
    <event type="alternative splicing"/>
    <isoform>
        <id>P20115-1</id>
        <name>1</name>
        <sequence type="displayed"/>
    </isoform>
    <isoform>
        <id>P20115-2</id>
        <name>2</name>
        <sequence type="described" ref="VSP_009185"/>
    </isoform>
</comment>
<comment type="miscellaneous">
    <text>Citrate synthase is found in nearly all cells capable of oxidative metabolism.</text>
</comment>
<comment type="similarity">
    <text evidence="6">Belongs to the citrate synthase family.</text>
</comment>
<comment type="sequence caution" evidence="6">
    <conflict type="frameshift">
        <sequence resource="EMBL-CDS" id="CAA35570"/>
    </conflict>
</comment>
<evidence type="ECO:0000255" key="1"/>
<evidence type="ECO:0000255" key="2">
    <source>
        <dbReference type="PROSITE-ProRule" id="PRU10117"/>
    </source>
</evidence>
<evidence type="ECO:0000269" key="3">
    <source>
    </source>
</evidence>
<evidence type="ECO:0000303" key="4">
    <source>
    </source>
</evidence>
<evidence type="ECO:0000303" key="5">
    <source ref="5"/>
</evidence>
<evidence type="ECO:0000305" key="6"/>
<evidence type="ECO:0007829" key="7">
    <source>
        <dbReference type="PDB" id="6K5V"/>
    </source>
</evidence>
<keyword id="KW-0002">3D-structure</keyword>
<keyword id="KW-0025">Alternative splicing</keyword>
<keyword id="KW-0496">Mitochondrion</keyword>
<keyword id="KW-1185">Reference proteome</keyword>
<keyword id="KW-0808">Transferase</keyword>
<keyword id="KW-0809">Transit peptide</keyword>
<keyword id="KW-0816">Tricarboxylic acid cycle</keyword>
<feature type="transit peptide" description="Mitochondrion" evidence="1">
    <location>
        <begin position="1"/>
        <end position="16"/>
    </location>
</feature>
<feature type="chain" id="PRO_0000005484" description="Citrate synthase 4, mitochondrial">
    <location>
        <begin position="17"/>
        <end position="474"/>
    </location>
</feature>
<feature type="active site" evidence="2">
    <location>
        <position position="308"/>
    </location>
</feature>
<feature type="active site" evidence="2">
    <location>
        <position position="354"/>
    </location>
</feature>
<feature type="active site" evidence="2">
    <location>
        <position position="409"/>
    </location>
</feature>
<feature type="splice variant" id="VSP_009185" description="In isoform 2." evidence="4 5">
    <location>
        <position position="18"/>
    </location>
</feature>
<feature type="sequence conflict" description="In Ref. 5; AAM62868." evidence="6" ref="5">
    <original>S</original>
    <variation>N</variation>
    <location>
        <position position="25"/>
    </location>
</feature>
<feature type="sequence conflict" description="In Ref. 1; CAA35570." evidence="6" ref="1">
    <original>QQ</original>
    <variation>HK</variation>
    <location>
        <begin position="52"/>
        <end position="53"/>
    </location>
</feature>
<feature type="sequence conflict" description="In Ref. 1; CAA35570." evidence="6" ref="1">
    <original>V</original>
    <variation>AL</variation>
    <location>
        <position position="112"/>
    </location>
</feature>
<feature type="sequence conflict" description="In Ref. 1; CAA35570." evidence="6" ref="1">
    <original>P</original>
    <variation>S</variation>
    <location>
        <position position="156"/>
    </location>
</feature>
<feature type="sequence conflict" description="In Ref. 1; CAA35570." evidence="6" ref="1">
    <original>KV</original>
    <variation>RL</variation>
    <location>
        <begin position="257"/>
        <end position="258"/>
    </location>
</feature>
<feature type="sequence conflict" description="In Ref. 1; CAA35570." evidence="6" ref="1">
    <original>L</original>
    <variation>H</variation>
    <location>
        <position position="375"/>
    </location>
</feature>
<feature type="sequence conflict" description="In Ref. 1; CAA35570." evidence="6" ref="1">
    <original>LVS</original>
    <variation>CC</variation>
    <location>
        <begin position="383"/>
        <end position="385"/>
    </location>
</feature>
<feature type="sequence conflict" description="In Ref. 1; CAA35570." evidence="6" ref="1">
    <original>ALG</original>
    <variation>ELL</variation>
    <location>
        <begin position="448"/>
        <end position="450"/>
    </location>
</feature>
<feature type="helix" evidence="7">
    <location>
        <begin position="41"/>
        <end position="63"/>
    </location>
</feature>
<feature type="strand" evidence="7">
    <location>
        <begin position="67"/>
        <end position="72"/>
    </location>
</feature>
<feature type="helix" evidence="7">
    <location>
        <begin position="73"/>
        <end position="77"/>
    </location>
</feature>
<feature type="turn" evidence="7">
    <location>
        <begin position="78"/>
        <end position="82"/>
    </location>
</feature>
<feature type="strand" evidence="7">
    <location>
        <begin position="84"/>
        <end position="87"/>
    </location>
</feature>
<feature type="strand" evidence="7">
    <location>
        <begin position="90"/>
        <end position="94"/>
    </location>
</feature>
<feature type="turn" evidence="7">
    <location>
        <begin position="95"/>
        <end position="97"/>
    </location>
</feature>
<feature type="strand" evidence="7">
    <location>
        <begin position="98"/>
        <end position="101"/>
    </location>
</feature>
<feature type="helix" evidence="7">
    <location>
        <begin position="106"/>
        <end position="112"/>
    </location>
</feature>
<feature type="helix" evidence="7">
    <location>
        <begin position="124"/>
        <end position="133"/>
    </location>
</feature>
<feature type="helix" evidence="7">
    <location>
        <begin position="139"/>
        <end position="151"/>
    </location>
</feature>
<feature type="helix" evidence="7">
    <location>
        <begin position="157"/>
        <end position="165"/>
    </location>
</feature>
<feature type="helix" evidence="7">
    <location>
        <begin position="172"/>
        <end position="183"/>
    </location>
</feature>
<feature type="helix" evidence="7">
    <location>
        <begin position="184"/>
        <end position="186"/>
    </location>
</feature>
<feature type="helix" evidence="7">
    <location>
        <begin position="188"/>
        <end position="194"/>
    </location>
</feature>
<feature type="helix" evidence="7">
    <location>
        <begin position="199"/>
        <end position="201"/>
    </location>
</feature>
<feature type="helix" evidence="7">
    <location>
        <begin position="203"/>
        <end position="229"/>
    </location>
</feature>
<feature type="helix" evidence="7">
    <location>
        <begin position="243"/>
        <end position="251"/>
    </location>
</feature>
<feature type="helix" evidence="7">
    <location>
        <begin position="256"/>
        <end position="268"/>
    </location>
</feature>
<feature type="helix" evidence="7">
    <location>
        <begin position="277"/>
        <end position="287"/>
    </location>
</feature>
<feature type="helix" evidence="7">
    <location>
        <begin position="292"/>
        <end position="303"/>
    </location>
</feature>
<feature type="turn" evidence="7">
    <location>
        <begin position="306"/>
        <end position="308"/>
    </location>
</feature>
<feature type="helix" evidence="7">
    <location>
        <begin position="311"/>
        <end position="326"/>
    </location>
</feature>
<feature type="helix" evidence="7">
    <location>
        <begin position="332"/>
        <end position="344"/>
    </location>
</feature>
<feature type="strand" evidence="7">
    <location>
        <begin position="357"/>
        <end position="359"/>
    </location>
</feature>
<feature type="helix" evidence="7">
    <location>
        <begin position="362"/>
        <end position="374"/>
    </location>
</feature>
<feature type="helix" evidence="7">
    <location>
        <begin position="379"/>
        <end position="398"/>
    </location>
</feature>
<feature type="helix" evidence="7">
    <location>
        <begin position="408"/>
        <end position="410"/>
    </location>
</feature>
<feature type="helix" evidence="7">
    <location>
        <begin position="412"/>
        <end position="418"/>
    </location>
</feature>
<feature type="helix" evidence="7">
    <location>
        <begin position="424"/>
        <end position="426"/>
    </location>
</feature>
<feature type="helix" evidence="7">
    <location>
        <begin position="427"/>
        <end position="448"/>
    </location>
</feature>
<feature type="strand" evidence="7">
    <location>
        <begin position="457"/>
        <end position="459"/>
    </location>
</feature>
<feature type="helix" evidence="7">
    <location>
        <begin position="461"/>
        <end position="468"/>
    </location>
</feature>
<organism>
    <name type="scientific">Arabidopsis thaliana</name>
    <name type="common">Mouse-ear cress</name>
    <dbReference type="NCBI Taxonomy" id="3702"/>
    <lineage>
        <taxon>Eukaryota</taxon>
        <taxon>Viridiplantae</taxon>
        <taxon>Streptophyta</taxon>
        <taxon>Embryophyta</taxon>
        <taxon>Tracheophyta</taxon>
        <taxon>Spermatophyta</taxon>
        <taxon>Magnoliopsida</taxon>
        <taxon>eudicotyledons</taxon>
        <taxon>Gunneridae</taxon>
        <taxon>Pentapetalae</taxon>
        <taxon>rosids</taxon>
        <taxon>malvids</taxon>
        <taxon>Brassicales</taxon>
        <taxon>Brassicaceae</taxon>
        <taxon>Camelineae</taxon>
        <taxon>Arabidopsis</taxon>
    </lineage>
</organism>
<sequence length="474" mass="52782">MVFFRSVSAFTRLRSRVQGQQSSLSNSVRWIQMQSSTDLDLKSQLQELIPEQQDRLKKLKSEHGKVQLGNITVDMVIGGMRGMTGLLWETSLLDPEEGIRFRGLSIPECQKVLPTAQSGAEPLPEGLLWLLLTGKVPSKEQVEALSKDLANRAAVPDYVYNAIDALPSTAHPMTQFASGVMALQVQSEFQKAYENGIHKSKFWEPTYEDCLNLIARVPVVAAYVYRRMYKNGDSIPSDKSLDYGANFSHMLGFDDEKVKELMRLYITIHSDHEGGNVSAHTGHLVGSALSDPYLSFAAALNGLAGPLHGLANQEVLLWIKSVVEECGEDISKEQLKEYVWKTLNSGKVIPGYGHGVLRNTDPRYVCQREFALKHLPDDPLFQLVSKLYEVVPPVLTELGKVKNPWPNVDAHSGVLLNHYGLTEARYYTVLFGVSRSLGICSQLIWDRALGLALERPKSVTMDWLEAHCKKASSA</sequence>
<name>CISY4_ARATH</name>
<gene>
    <name type="primary">CSY4</name>
    <name type="ordered locus">At2g44350</name>
    <name type="ORF">F4I1.16</name>
</gene>
<proteinExistence type="evidence at protein level"/>
<accession>P20115</accession>
<accession>O64869</accession>
<accession>Q8LE36</accession>
<accession>Q94EY6</accession>
<dbReference type="EC" id="2.3.3.16"/>
<dbReference type="EMBL" id="X17528">
    <property type="protein sequence ID" value="CAA35570.1"/>
    <property type="status" value="ALT_FRAME"/>
    <property type="molecule type" value="mRNA"/>
</dbReference>
<dbReference type="EMBL" id="AC004521">
    <property type="protein sequence ID" value="AAC16084.2"/>
    <property type="molecule type" value="Genomic_DNA"/>
</dbReference>
<dbReference type="EMBL" id="CP002685">
    <property type="protein sequence ID" value="AEC10410.1"/>
    <property type="molecule type" value="Genomic_DNA"/>
</dbReference>
<dbReference type="EMBL" id="CP002685">
    <property type="protein sequence ID" value="AEC10411.1"/>
    <property type="molecule type" value="Genomic_DNA"/>
</dbReference>
<dbReference type="EMBL" id="CP002685">
    <property type="protein sequence ID" value="ANM62353.1"/>
    <property type="molecule type" value="Genomic_DNA"/>
</dbReference>
<dbReference type="EMBL" id="CP002685">
    <property type="protein sequence ID" value="ANM62354.1"/>
    <property type="molecule type" value="Genomic_DNA"/>
</dbReference>
<dbReference type="EMBL" id="AF387018">
    <property type="protein sequence ID" value="AAK62463.1"/>
    <property type="molecule type" value="mRNA"/>
</dbReference>
<dbReference type="EMBL" id="BT006613">
    <property type="protein sequence ID" value="AAP31957.1"/>
    <property type="molecule type" value="mRNA"/>
</dbReference>
<dbReference type="EMBL" id="AY085647">
    <property type="protein sequence ID" value="AAM62868.1"/>
    <property type="molecule type" value="mRNA"/>
</dbReference>
<dbReference type="PIR" id="JA0149">
    <property type="entry name" value="YKMUM"/>
</dbReference>
<dbReference type="PIR" id="T02390">
    <property type="entry name" value="T02390"/>
</dbReference>
<dbReference type="RefSeq" id="NP_001324514.1">
    <molecule id="P20115-1"/>
    <property type="nucleotide sequence ID" value="NM_001337082.1"/>
</dbReference>
<dbReference type="RefSeq" id="NP_001324515.1">
    <molecule id="P20115-2"/>
    <property type="nucleotide sequence ID" value="NM_001337083.1"/>
</dbReference>
<dbReference type="RefSeq" id="NP_566016.1">
    <molecule id="P20115-2"/>
    <property type="nucleotide sequence ID" value="NM_129998.3"/>
</dbReference>
<dbReference type="RefSeq" id="NP_850415.1">
    <molecule id="P20115-1"/>
    <property type="nucleotide sequence ID" value="NM_180084.2"/>
</dbReference>
<dbReference type="PDB" id="6K5V">
    <property type="method" value="X-ray"/>
    <property type="resolution" value="2.69 A"/>
    <property type="chains" value="A/B/C/D/E/F=17-474"/>
</dbReference>
<dbReference type="PDBsum" id="6K5V"/>
<dbReference type="SMR" id="P20115"/>
<dbReference type="BioGRID" id="4378">
    <property type="interactions" value="25"/>
</dbReference>
<dbReference type="FunCoup" id="P20115">
    <property type="interactions" value="3654"/>
</dbReference>
<dbReference type="IntAct" id="P20115">
    <property type="interactions" value="2"/>
</dbReference>
<dbReference type="STRING" id="3702.P20115"/>
<dbReference type="PaxDb" id="3702-AT2G44350.2"/>
<dbReference type="ProteomicsDB" id="246696">
    <molecule id="P20115-1"/>
</dbReference>
<dbReference type="EnsemblPlants" id="AT2G44350.1">
    <molecule id="P20115-2"/>
    <property type="protein sequence ID" value="AT2G44350.1"/>
    <property type="gene ID" value="AT2G44350"/>
</dbReference>
<dbReference type="EnsemblPlants" id="AT2G44350.2">
    <molecule id="P20115-1"/>
    <property type="protein sequence ID" value="AT2G44350.2"/>
    <property type="gene ID" value="AT2G44350"/>
</dbReference>
<dbReference type="EnsemblPlants" id="AT2G44350.3">
    <molecule id="P20115-1"/>
    <property type="protein sequence ID" value="AT2G44350.3"/>
    <property type="gene ID" value="AT2G44350"/>
</dbReference>
<dbReference type="EnsemblPlants" id="AT2G44350.4">
    <molecule id="P20115-2"/>
    <property type="protein sequence ID" value="AT2G44350.4"/>
    <property type="gene ID" value="AT2G44350"/>
</dbReference>
<dbReference type="GeneID" id="819042"/>
<dbReference type="Gramene" id="AT2G44350.1">
    <molecule id="P20115-2"/>
    <property type="protein sequence ID" value="AT2G44350.1"/>
    <property type="gene ID" value="AT2G44350"/>
</dbReference>
<dbReference type="Gramene" id="AT2G44350.2">
    <molecule id="P20115-1"/>
    <property type="protein sequence ID" value="AT2G44350.2"/>
    <property type="gene ID" value="AT2G44350"/>
</dbReference>
<dbReference type="Gramene" id="AT2G44350.3">
    <molecule id="P20115-1"/>
    <property type="protein sequence ID" value="AT2G44350.3"/>
    <property type="gene ID" value="AT2G44350"/>
</dbReference>
<dbReference type="Gramene" id="AT2G44350.4">
    <molecule id="P20115-2"/>
    <property type="protein sequence ID" value="AT2G44350.4"/>
    <property type="gene ID" value="AT2G44350"/>
</dbReference>
<dbReference type="KEGG" id="ath:AT2G44350"/>
<dbReference type="Araport" id="AT2G44350"/>
<dbReference type="TAIR" id="AT2G44350">
    <property type="gene designation" value="ATCS"/>
</dbReference>
<dbReference type="eggNOG" id="KOG2617">
    <property type="taxonomic scope" value="Eukaryota"/>
</dbReference>
<dbReference type="InParanoid" id="P20115"/>
<dbReference type="OMA" id="YTVIFGI"/>
<dbReference type="OrthoDB" id="8017587at2759"/>
<dbReference type="PhylomeDB" id="P20115"/>
<dbReference type="BioCyc" id="ARA:AT2G44350-MONOMER"/>
<dbReference type="BioCyc" id="MetaCyc:AT2G44350-MONOMER"/>
<dbReference type="BRENDA" id="2.3.3.16">
    <property type="organism ID" value="399"/>
</dbReference>
<dbReference type="UniPathway" id="UPA00223">
    <property type="reaction ID" value="UER00717"/>
</dbReference>
<dbReference type="PRO" id="PR:P20115"/>
<dbReference type="Proteomes" id="UP000006548">
    <property type="component" value="Chromosome 2"/>
</dbReference>
<dbReference type="ExpressionAtlas" id="P20115">
    <property type="expression patterns" value="baseline and differential"/>
</dbReference>
<dbReference type="GO" id="GO:0009507">
    <property type="term" value="C:chloroplast"/>
    <property type="evidence" value="ECO:0007005"/>
    <property type="project" value="TAIR"/>
</dbReference>
<dbReference type="GO" id="GO:0005829">
    <property type="term" value="C:cytosol"/>
    <property type="evidence" value="ECO:0007005"/>
    <property type="project" value="TAIR"/>
</dbReference>
<dbReference type="GO" id="GO:0005759">
    <property type="term" value="C:mitochondrial matrix"/>
    <property type="evidence" value="ECO:0007669"/>
    <property type="project" value="UniProtKB-SubCell"/>
</dbReference>
<dbReference type="GO" id="GO:0005739">
    <property type="term" value="C:mitochondrion"/>
    <property type="evidence" value="ECO:0007005"/>
    <property type="project" value="TAIR"/>
</dbReference>
<dbReference type="GO" id="GO:0009505">
    <property type="term" value="C:plant-type cell wall"/>
    <property type="evidence" value="ECO:0007005"/>
    <property type="project" value="TAIR"/>
</dbReference>
<dbReference type="GO" id="GO:0005524">
    <property type="term" value="F:ATP binding"/>
    <property type="evidence" value="ECO:0007005"/>
    <property type="project" value="TAIR"/>
</dbReference>
<dbReference type="GO" id="GO:0004108">
    <property type="term" value="F:citrate (Si)-synthase activity"/>
    <property type="evidence" value="ECO:0000314"/>
    <property type="project" value="TAIR"/>
</dbReference>
<dbReference type="GO" id="GO:0008270">
    <property type="term" value="F:zinc ion binding"/>
    <property type="evidence" value="ECO:0007005"/>
    <property type="project" value="TAIR"/>
</dbReference>
<dbReference type="GO" id="GO:0006101">
    <property type="term" value="P:citrate metabolic process"/>
    <property type="evidence" value="ECO:0007669"/>
    <property type="project" value="InterPro"/>
</dbReference>
<dbReference type="GO" id="GO:0006099">
    <property type="term" value="P:tricarboxylic acid cycle"/>
    <property type="evidence" value="ECO:0000304"/>
    <property type="project" value="TAIR"/>
</dbReference>
<dbReference type="CDD" id="cd06105">
    <property type="entry name" value="ScCit1-2_like"/>
    <property type="match status" value="1"/>
</dbReference>
<dbReference type="FunFam" id="1.10.230.10:FF:000001">
    <property type="entry name" value="Citrate synthase"/>
    <property type="match status" value="1"/>
</dbReference>
<dbReference type="FunFam" id="1.10.580.10:FF:000001">
    <property type="entry name" value="Citrate synthase"/>
    <property type="match status" value="1"/>
</dbReference>
<dbReference type="Gene3D" id="1.10.580.10">
    <property type="entry name" value="Citrate Synthase, domain 1"/>
    <property type="match status" value="1"/>
</dbReference>
<dbReference type="Gene3D" id="1.10.230.10">
    <property type="entry name" value="Cytochrome P450-Terp, domain 2"/>
    <property type="match status" value="1"/>
</dbReference>
<dbReference type="InterPro" id="IPR016142">
    <property type="entry name" value="Citrate_synth-like_lrg_a-sub"/>
</dbReference>
<dbReference type="InterPro" id="IPR016143">
    <property type="entry name" value="Citrate_synth-like_sm_a-sub"/>
</dbReference>
<dbReference type="InterPro" id="IPR002020">
    <property type="entry name" value="Citrate_synthase"/>
</dbReference>
<dbReference type="InterPro" id="IPR019810">
    <property type="entry name" value="Citrate_synthase_AS"/>
</dbReference>
<dbReference type="InterPro" id="IPR010109">
    <property type="entry name" value="Citrate_synthase_euk"/>
</dbReference>
<dbReference type="InterPro" id="IPR036969">
    <property type="entry name" value="Citrate_synthase_sf"/>
</dbReference>
<dbReference type="NCBIfam" id="TIGR01793">
    <property type="entry name" value="cit_synth_euk"/>
    <property type="match status" value="1"/>
</dbReference>
<dbReference type="NCBIfam" id="NF007128">
    <property type="entry name" value="PRK09569.1"/>
    <property type="match status" value="1"/>
</dbReference>
<dbReference type="PANTHER" id="PTHR11739">
    <property type="entry name" value="CITRATE SYNTHASE"/>
    <property type="match status" value="1"/>
</dbReference>
<dbReference type="PANTHER" id="PTHR11739:SF33">
    <property type="entry name" value="CITRATE SYNTHASE 4, MITOCHONDRIAL"/>
    <property type="match status" value="1"/>
</dbReference>
<dbReference type="Pfam" id="PF00285">
    <property type="entry name" value="Citrate_synt"/>
    <property type="match status" value="1"/>
</dbReference>
<dbReference type="PRINTS" id="PR00143">
    <property type="entry name" value="CITRTSNTHASE"/>
</dbReference>
<dbReference type="SUPFAM" id="SSF48256">
    <property type="entry name" value="Citrate synthase"/>
    <property type="match status" value="1"/>
</dbReference>
<dbReference type="PROSITE" id="PS00480">
    <property type="entry name" value="CITRATE_SYNTHASE"/>
    <property type="match status" value="1"/>
</dbReference>